<feature type="chain" id="PRO_0000124942" description="Large ribosomal subunit protein uL5">
    <location>
        <begin position="1"/>
        <end position="179"/>
    </location>
</feature>
<organism>
    <name type="scientific">Listeria innocua serovar 6a (strain ATCC BAA-680 / CLIP 11262)</name>
    <dbReference type="NCBI Taxonomy" id="272626"/>
    <lineage>
        <taxon>Bacteria</taxon>
        <taxon>Bacillati</taxon>
        <taxon>Bacillota</taxon>
        <taxon>Bacilli</taxon>
        <taxon>Bacillales</taxon>
        <taxon>Listeriaceae</taxon>
        <taxon>Listeria</taxon>
    </lineage>
</organism>
<evidence type="ECO:0000255" key="1">
    <source>
        <dbReference type="HAMAP-Rule" id="MF_01333"/>
    </source>
</evidence>
<evidence type="ECO:0000305" key="2"/>
<accession>Q7ANU7</accession>
<keyword id="KW-0687">Ribonucleoprotein</keyword>
<keyword id="KW-0689">Ribosomal protein</keyword>
<keyword id="KW-0694">RNA-binding</keyword>
<keyword id="KW-0699">rRNA-binding</keyword>
<keyword id="KW-0820">tRNA-binding</keyword>
<proteinExistence type="inferred from homology"/>
<sequence>MNRLKDQYLKEIVPALMSKFNYDSVMEVPKIDKIVINTGVGDATANAKVLDSAVEELALITGQKPVITKAKNSIAGFRLREGMPIGAKVTLRGERMYDFLDKLVTVSLPRVRDFRGVSKKAFDGRGNYTLGVREQLIFPEIDYDQVSKVRGMDVVIVTTAKSDEESHELLTQLGMPFQK</sequence>
<protein>
    <recommendedName>
        <fullName evidence="1">Large ribosomal subunit protein uL5</fullName>
    </recommendedName>
    <alternativeName>
        <fullName evidence="2">50S ribosomal protein L5</fullName>
    </alternativeName>
</protein>
<dbReference type="EMBL" id="AL596173">
    <property type="protein sequence ID" value="CAC97995.1"/>
    <property type="molecule type" value="Genomic_DNA"/>
</dbReference>
<dbReference type="PIR" id="AC1778">
    <property type="entry name" value="AC1778"/>
</dbReference>
<dbReference type="RefSeq" id="WP_003720938.1">
    <property type="nucleotide sequence ID" value="NC_003212.1"/>
</dbReference>
<dbReference type="SMR" id="Q7ANU7"/>
<dbReference type="STRING" id="272626.gene:17567156"/>
<dbReference type="GeneID" id="93240501"/>
<dbReference type="KEGG" id="lin:rplE"/>
<dbReference type="eggNOG" id="COG0094">
    <property type="taxonomic scope" value="Bacteria"/>
</dbReference>
<dbReference type="HOGENOM" id="CLU_061015_2_1_9"/>
<dbReference type="OrthoDB" id="9806626at2"/>
<dbReference type="Proteomes" id="UP000002513">
    <property type="component" value="Chromosome"/>
</dbReference>
<dbReference type="GO" id="GO:1990904">
    <property type="term" value="C:ribonucleoprotein complex"/>
    <property type="evidence" value="ECO:0007669"/>
    <property type="project" value="UniProtKB-KW"/>
</dbReference>
<dbReference type="GO" id="GO:0005840">
    <property type="term" value="C:ribosome"/>
    <property type="evidence" value="ECO:0007669"/>
    <property type="project" value="UniProtKB-KW"/>
</dbReference>
<dbReference type="GO" id="GO:0019843">
    <property type="term" value="F:rRNA binding"/>
    <property type="evidence" value="ECO:0007669"/>
    <property type="project" value="UniProtKB-UniRule"/>
</dbReference>
<dbReference type="GO" id="GO:0003735">
    <property type="term" value="F:structural constituent of ribosome"/>
    <property type="evidence" value="ECO:0007669"/>
    <property type="project" value="InterPro"/>
</dbReference>
<dbReference type="GO" id="GO:0000049">
    <property type="term" value="F:tRNA binding"/>
    <property type="evidence" value="ECO:0007669"/>
    <property type="project" value="UniProtKB-UniRule"/>
</dbReference>
<dbReference type="GO" id="GO:0006412">
    <property type="term" value="P:translation"/>
    <property type="evidence" value="ECO:0007669"/>
    <property type="project" value="UniProtKB-UniRule"/>
</dbReference>
<dbReference type="FunFam" id="3.30.1440.10:FF:000001">
    <property type="entry name" value="50S ribosomal protein L5"/>
    <property type="match status" value="1"/>
</dbReference>
<dbReference type="Gene3D" id="3.30.1440.10">
    <property type="match status" value="1"/>
</dbReference>
<dbReference type="HAMAP" id="MF_01333_B">
    <property type="entry name" value="Ribosomal_uL5_B"/>
    <property type="match status" value="1"/>
</dbReference>
<dbReference type="InterPro" id="IPR002132">
    <property type="entry name" value="Ribosomal_uL5"/>
</dbReference>
<dbReference type="InterPro" id="IPR020930">
    <property type="entry name" value="Ribosomal_uL5_bac-type"/>
</dbReference>
<dbReference type="InterPro" id="IPR031309">
    <property type="entry name" value="Ribosomal_uL5_C"/>
</dbReference>
<dbReference type="InterPro" id="IPR020929">
    <property type="entry name" value="Ribosomal_uL5_CS"/>
</dbReference>
<dbReference type="InterPro" id="IPR022803">
    <property type="entry name" value="Ribosomal_uL5_dom_sf"/>
</dbReference>
<dbReference type="InterPro" id="IPR031310">
    <property type="entry name" value="Ribosomal_uL5_N"/>
</dbReference>
<dbReference type="NCBIfam" id="NF000585">
    <property type="entry name" value="PRK00010.1"/>
    <property type="match status" value="1"/>
</dbReference>
<dbReference type="PANTHER" id="PTHR11994">
    <property type="entry name" value="60S RIBOSOMAL PROTEIN L11-RELATED"/>
    <property type="match status" value="1"/>
</dbReference>
<dbReference type="Pfam" id="PF00281">
    <property type="entry name" value="Ribosomal_L5"/>
    <property type="match status" value="1"/>
</dbReference>
<dbReference type="Pfam" id="PF00673">
    <property type="entry name" value="Ribosomal_L5_C"/>
    <property type="match status" value="1"/>
</dbReference>
<dbReference type="PIRSF" id="PIRSF002161">
    <property type="entry name" value="Ribosomal_L5"/>
    <property type="match status" value="1"/>
</dbReference>
<dbReference type="SUPFAM" id="SSF55282">
    <property type="entry name" value="RL5-like"/>
    <property type="match status" value="1"/>
</dbReference>
<dbReference type="PROSITE" id="PS00358">
    <property type="entry name" value="RIBOSOMAL_L5"/>
    <property type="match status" value="1"/>
</dbReference>
<name>RL5_LISIN</name>
<comment type="function">
    <text evidence="1">This is one of the proteins that bind and probably mediate the attachment of the 5S RNA into the large ribosomal subunit, where it forms part of the central protuberance. In the 70S ribosome it contacts protein S13 of the 30S subunit (bridge B1b), connecting the 2 subunits; this bridge is implicated in subunit movement. Contacts the P site tRNA; the 5S rRNA and some of its associated proteins might help stabilize positioning of ribosome-bound tRNAs.</text>
</comment>
<comment type="subunit">
    <text evidence="1">Part of the 50S ribosomal subunit; part of the 5S rRNA/L5/L18/L25 subcomplex. Contacts the 5S rRNA and the P site tRNA. Forms a bridge to the 30S subunit in the 70S ribosome.</text>
</comment>
<comment type="similarity">
    <text evidence="1">Belongs to the universal ribosomal protein uL5 family.</text>
</comment>
<reference key="1">
    <citation type="journal article" date="2001" name="Science">
        <title>Comparative genomics of Listeria species.</title>
        <authorList>
            <person name="Glaser P."/>
            <person name="Frangeul L."/>
            <person name="Buchrieser C."/>
            <person name="Rusniok C."/>
            <person name="Amend A."/>
            <person name="Baquero F."/>
            <person name="Berche P."/>
            <person name="Bloecker H."/>
            <person name="Brandt P."/>
            <person name="Chakraborty T."/>
            <person name="Charbit A."/>
            <person name="Chetouani F."/>
            <person name="Couve E."/>
            <person name="de Daruvar A."/>
            <person name="Dehoux P."/>
            <person name="Domann E."/>
            <person name="Dominguez-Bernal G."/>
            <person name="Duchaud E."/>
            <person name="Durant L."/>
            <person name="Dussurget O."/>
            <person name="Entian K.-D."/>
            <person name="Fsihi H."/>
            <person name="Garcia-del Portillo F."/>
            <person name="Garrido P."/>
            <person name="Gautier L."/>
            <person name="Goebel W."/>
            <person name="Gomez-Lopez N."/>
            <person name="Hain T."/>
            <person name="Hauf J."/>
            <person name="Jackson D."/>
            <person name="Jones L.-M."/>
            <person name="Kaerst U."/>
            <person name="Kreft J."/>
            <person name="Kuhn M."/>
            <person name="Kunst F."/>
            <person name="Kurapkat G."/>
            <person name="Madueno E."/>
            <person name="Maitournam A."/>
            <person name="Mata Vicente J."/>
            <person name="Ng E."/>
            <person name="Nedjari H."/>
            <person name="Nordsiek G."/>
            <person name="Novella S."/>
            <person name="de Pablos B."/>
            <person name="Perez-Diaz J.-C."/>
            <person name="Purcell R."/>
            <person name="Remmel B."/>
            <person name="Rose M."/>
            <person name="Schlueter T."/>
            <person name="Simoes N."/>
            <person name="Tierrez A."/>
            <person name="Vazquez-Boland J.-A."/>
            <person name="Voss H."/>
            <person name="Wehland J."/>
            <person name="Cossart P."/>
        </authorList>
    </citation>
    <scope>NUCLEOTIDE SEQUENCE [LARGE SCALE GENOMIC DNA]</scope>
    <source>
        <strain>ATCC BAA-680 / CLIP 11262</strain>
    </source>
</reference>
<gene>
    <name evidence="1" type="primary">rplE</name>
    <name type="ordered locus">lin2769</name>
</gene>